<gene>
    <name evidence="1" type="primary">ppaC</name>
    <name type="ordered locus">SP_1534</name>
</gene>
<accession>P65755</accession>
<accession>Q97PR8</accession>
<keyword id="KW-0963">Cytoplasm</keyword>
<keyword id="KW-0378">Hydrolase</keyword>
<keyword id="KW-0464">Manganese</keyword>
<keyword id="KW-0479">Metal-binding</keyword>
<keyword id="KW-1185">Reference proteome</keyword>
<protein>
    <recommendedName>
        <fullName evidence="1">Probable manganese-dependent inorganic pyrophosphatase</fullName>
        <ecNumber evidence="1">3.6.1.1</ecNumber>
    </recommendedName>
    <alternativeName>
        <fullName evidence="1">Pyrophosphate phospho-hydrolase</fullName>
        <shortName evidence="1">PPase</shortName>
    </alternativeName>
</protein>
<reference key="1">
    <citation type="journal article" date="2001" name="Science">
        <title>Complete genome sequence of a virulent isolate of Streptococcus pneumoniae.</title>
        <authorList>
            <person name="Tettelin H."/>
            <person name="Nelson K.E."/>
            <person name="Paulsen I.T."/>
            <person name="Eisen J.A."/>
            <person name="Read T.D."/>
            <person name="Peterson S.N."/>
            <person name="Heidelberg J.F."/>
            <person name="DeBoy R.T."/>
            <person name="Haft D.H."/>
            <person name="Dodson R.J."/>
            <person name="Durkin A.S."/>
            <person name="Gwinn M.L."/>
            <person name="Kolonay J.F."/>
            <person name="Nelson W.C."/>
            <person name="Peterson J.D."/>
            <person name="Umayam L.A."/>
            <person name="White O."/>
            <person name="Salzberg S.L."/>
            <person name="Lewis M.R."/>
            <person name="Radune D."/>
            <person name="Holtzapple E.K."/>
            <person name="Khouri H.M."/>
            <person name="Wolf A.M."/>
            <person name="Utterback T.R."/>
            <person name="Hansen C.L."/>
            <person name="McDonald L.A."/>
            <person name="Feldblyum T.V."/>
            <person name="Angiuoli S.V."/>
            <person name="Dickinson T."/>
            <person name="Hickey E.K."/>
            <person name="Holt I.E."/>
            <person name="Loftus B.J."/>
            <person name="Yang F."/>
            <person name="Smith H.O."/>
            <person name="Venter J.C."/>
            <person name="Dougherty B.A."/>
            <person name="Morrison D.A."/>
            <person name="Hollingshead S.K."/>
            <person name="Fraser C.M."/>
        </authorList>
    </citation>
    <scope>NUCLEOTIDE SEQUENCE [LARGE SCALE GENOMIC DNA]</scope>
    <source>
        <strain>ATCC BAA-334 / TIGR4</strain>
    </source>
</reference>
<proteinExistence type="inferred from homology"/>
<evidence type="ECO:0000255" key="1">
    <source>
        <dbReference type="HAMAP-Rule" id="MF_00207"/>
    </source>
</evidence>
<sequence length="311" mass="33479">MSKILVFGHQNPDSDAIGSSVAFAYLAKEAYGLDTEAVALGTPNEETAFVLNYFGVEAPRVITSAKAEGAEQVILTDHNEFQQSVSDIAEVEVYGVVDHHRVANFETASPLYMRLEPVGSASSIVYRMFKEHGVAVPKEIAGLMLSGLISDTLLLKSPTTHPTDKIIAPELAELAGVNLEEYGLAMLKAGTNLASKSAEELIDIDAKTFELNGNNVRVAQVNTVDIAEVLERQAEIEAAMQAANESNGYSDFVLMITDIVNSNSEILALGANMDKVEAAFNFKLENNHAFLAGAVSRKKQVVPQLTESFNA</sequence>
<organism>
    <name type="scientific">Streptococcus pneumoniae serotype 4 (strain ATCC BAA-334 / TIGR4)</name>
    <dbReference type="NCBI Taxonomy" id="170187"/>
    <lineage>
        <taxon>Bacteria</taxon>
        <taxon>Bacillati</taxon>
        <taxon>Bacillota</taxon>
        <taxon>Bacilli</taxon>
        <taxon>Lactobacillales</taxon>
        <taxon>Streptococcaceae</taxon>
        <taxon>Streptococcus</taxon>
    </lineage>
</organism>
<dbReference type="EC" id="3.6.1.1" evidence="1"/>
<dbReference type="EMBL" id="AE005672">
    <property type="protein sequence ID" value="AAK75622.1"/>
    <property type="molecule type" value="Genomic_DNA"/>
</dbReference>
<dbReference type="PIR" id="E95178">
    <property type="entry name" value="E95178"/>
</dbReference>
<dbReference type="RefSeq" id="WP_000036043.1">
    <property type="nucleotide sequence ID" value="NZ_CP155539.1"/>
</dbReference>
<dbReference type="SMR" id="P65755"/>
<dbReference type="IntAct" id="P65755">
    <property type="interactions" value="1"/>
</dbReference>
<dbReference type="PaxDb" id="170187-SP_1534"/>
<dbReference type="EnsemblBacteria" id="AAK75622">
    <property type="protein sequence ID" value="AAK75622"/>
    <property type="gene ID" value="SP_1534"/>
</dbReference>
<dbReference type="KEGG" id="spn:SP_1534"/>
<dbReference type="eggNOG" id="COG1227">
    <property type="taxonomic scope" value="Bacteria"/>
</dbReference>
<dbReference type="PhylomeDB" id="P65755"/>
<dbReference type="BioCyc" id="SPNE170187:G1FZB-1552-MONOMER"/>
<dbReference type="Proteomes" id="UP000000585">
    <property type="component" value="Chromosome"/>
</dbReference>
<dbReference type="GO" id="GO:0005737">
    <property type="term" value="C:cytoplasm"/>
    <property type="evidence" value="ECO:0007669"/>
    <property type="project" value="UniProtKB-SubCell"/>
</dbReference>
<dbReference type="GO" id="GO:0004427">
    <property type="term" value="F:inorganic diphosphate phosphatase activity"/>
    <property type="evidence" value="ECO:0007669"/>
    <property type="project" value="UniProtKB-UniRule"/>
</dbReference>
<dbReference type="GO" id="GO:0030145">
    <property type="term" value="F:manganese ion binding"/>
    <property type="evidence" value="ECO:0007669"/>
    <property type="project" value="UniProtKB-UniRule"/>
</dbReference>
<dbReference type="FunFam" id="3.10.310.20:FF:000001">
    <property type="entry name" value="Probable manganese-dependent inorganic pyrophosphatase"/>
    <property type="match status" value="1"/>
</dbReference>
<dbReference type="FunFam" id="3.90.1640.10:FF:000001">
    <property type="entry name" value="Probable manganese-dependent inorganic pyrophosphatase"/>
    <property type="match status" value="1"/>
</dbReference>
<dbReference type="Gene3D" id="3.10.310.20">
    <property type="entry name" value="DHHA2 domain"/>
    <property type="match status" value="1"/>
</dbReference>
<dbReference type="Gene3D" id="3.90.1640.10">
    <property type="entry name" value="inorganic pyrophosphatase (n-terminal core)"/>
    <property type="match status" value="1"/>
</dbReference>
<dbReference type="HAMAP" id="MF_00207">
    <property type="entry name" value="PPase_C"/>
    <property type="match status" value="1"/>
</dbReference>
<dbReference type="InterPro" id="IPR001667">
    <property type="entry name" value="DDH_dom"/>
</dbReference>
<dbReference type="InterPro" id="IPR038763">
    <property type="entry name" value="DHH_sf"/>
</dbReference>
<dbReference type="InterPro" id="IPR004097">
    <property type="entry name" value="DHHA2"/>
</dbReference>
<dbReference type="InterPro" id="IPR038222">
    <property type="entry name" value="DHHA2_dom_sf"/>
</dbReference>
<dbReference type="InterPro" id="IPR022934">
    <property type="entry name" value="Mn-dep_inorganic_PyrPase"/>
</dbReference>
<dbReference type="InterPro" id="IPR051319">
    <property type="entry name" value="Oligoribo/pAp-PDE_c-di-AMP_PDE"/>
</dbReference>
<dbReference type="NCBIfam" id="NF003877">
    <property type="entry name" value="PRK05427.1"/>
    <property type="match status" value="1"/>
</dbReference>
<dbReference type="PANTHER" id="PTHR47618">
    <property type="entry name" value="BIFUNCTIONAL OLIGORIBONUCLEASE AND PAP PHOSPHATASE NRNA"/>
    <property type="match status" value="1"/>
</dbReference>
<dbReference type="PANTHER" id="PTHR47618:SF1">
    <property type="entry name" value="BIFUNCTIONAL OLIGORIBONUCLEASE AND PAP PHOSPHATASE NRNA"/>
    <property type="match status" value="1"/>
</dbReference>
<dbReference type="Pfam" id="PF01368">
    <property type="entry name" value="DHH"/>
    <property type="match status" value="1"/>
</dbReference>
<dbReference type="Pfam" id="PF02833">
    <property type="entry name" value="DHHA2"/>
    <property type="match status" value="1"/>
</dbReference>
<dbReference type="SMART" id="SM01131">
    <property type="entry name" value="DHHA2"/>
    <property type="match status" value="1"/>
</dbReference>
<dbReference type="SUPFAM" id="SSF64182">
    <property type="entry name" value="DHH phosphoesterases"/>
    <property type="match status" value="1"/>
</dbReference>
<comment type="catalytic activity">
    <reaction evidence="1">
        <text>diphosphate + H2O = 2 phosphate + H(+)</text>
        <dbReference type="Rhea" id="RHEA:24576"/>
        <dbReference type="ChEBI" id="CHEBI:15377"/>
        <dbReference type="ChEBI" id="CHEBI:15378"/>
        <dbReference type="ChEBI" id="CHEBI:33019"/>
        <dbReference type="ChEBI" id="CHEBI:43474"/>
        <dbReference type="EC" id="3.6.1.1"/>
    </reaction>
</comment>
<comment type="cofactor">
    <cofactor evidence="1">
        <name>Mn(2+)</name>
        <dbReference type="ChEBI" id="CHEBI:29035"/>
    </cofactor>
    <text evidence="1">Binds 2 manganese ions per subunit.</text>
</comment>
<comment type="subcellular location">
    <subcellularLocation>
        <location evidence="1">Cytoplasm</location>
    </subcellularLocation>
</comment>
<comment type="similarity">
    <text evidence="1">Belongs to the PPase class C family.</text>
</comment>
<name>PPAC_STRPN</name>
<feature type="chain" id="PRO_0000158591" description="Probable manganese-dependent inorganic pyrophosphatase">
    <location>
        <begin position="1"/>
        <end position="311"/>
    </location>
</feature>
<feature type="binding site" evidence="1">
    <location>
        <position position="9"/>
    </location>
    <ligand>
        <name>Mn(2+)</name>
        <dbReference type="ChEBI" id="CHEBI:29035"/>
        <label>1</label>
    </ligand>
</feature>
<feature type="binding site" evidence="1">
    <location>
        <position position="13"/>
    </location>
    <ligand>
        <name>Mn(2+)</name>
        <dbReference type="ChEBI" id="CHEBI:29035"/>
        <label>1</label>
    </ligand>
</feature>
<feature type="binding site" evidence="1">
    <location>
        <position position="15"/>
    </location>
    <ligand>
        <name>Mn(2+)</name>
        <dbReference type="ChEBI" id="CHEBI:29035"/>
        <label>2</label>
    </ligand>
</feature>
<feature type="binding site" evidence="1">
    <location>
        <position position="77"/>
    </location>
    <ligand>
        <name>Mn(2+)</name>
        <dbReference type="ChEBI" id="CHEBI:29035"/>
        <label>1</label>
    </ligand>
</feature>
<feature type="binding site" evidence="1">
    <location>
        <position position="77"/>
    </location>
    <ligand>
        <name>Mn(2+)</name>
        <dbReference type="ChEBI" id="CHEBI:29035"/>
        <label>2</label>
    </ligand>
</feature>
<feature type="binding site" evidence="1">
    <location>
        <position position="99"/>
    </location>
    <ligand>
        <name>Mn(2+)</name>
        <dbReference type="ChEBI" id="CHEBI:29035"/>
        <label>2</label>
    </ligand>
</feature>
<feature type="binding site" evidence="1">
    <location>
        <position position="151"/>
    </location>
    <ligand>
        <name>Mn(2+)</name>
        <dbReference type="ChEBI" id="CHEBI:29035"/>
        <label>2</label>
    </ligand>
</feature>